<comment type="function">
    <text evidence="1">Involved in the Preiss-Handler pathway, which is a recycling route that permits the salvage of free nicotinamide (NM) and nicotinic acid (Na) involved in the NAD biosynthesis. Catalyzes the synthesis of beta-nicotinate D-ribonucleotide from nicotinate and 5-phospho-D-ribose 1-phosphate at the expense of ATP. It is not able to use nicotinamide. PncB2 appears to be responsible for the increased salvage synthesis of NAD during infection of host tissues (By similarity).</text>
</comment>
<comment type="catalytic activity">
    <reaction>
        <text>nicotinate + 5-phospho-alpha-D-ribose 1-diphosphate + ATP + H2O = nicotinate beta-D-ribonucleotide + ADP + phosphate + diphosphate</text>
        <dbReference type="Rhea" id="RHEA:36163"/>
        <dbReference type="ChEBI" id="CHEBI:15377"/>
        <dbReference type="ChEBI" id="CHEBI:30616"/>
        <dbReference type="ChEBI" id="CHEBI:32544"/>
        <dbReference type="ChEBI" id="CHEBI:33019"/>
        <dbReference type="ChEBI" id="CHEBI:43474"/>
        <dbReference type="ChEBI" id="CHEBI:57502"/>
        <dbReference type="ChEBI" id="CHEBI:58017"/>
        <dbReference type="ChEBI" id="CHEBI:456216"/>
        <dbReference type="EC" id="6.3.4.21"/>
    </reaction>
</comment>
<comment type="pathway">
    <text>Cofactor biosynthesis; NAD(+) biosynthesis; nicotinate D-ribonucleotide from nicotinate: step 1/1.</text>
</comment>
<comment type="induction">
    <text evidence="3">A member of the dormancy regulon. Induced in response to reduced oxygen tension (hypoxia) and low levels of nitric oxide (NO).</text>
</comment>
<comment type="PTM">
    <text evidence="2">Transiently phosphorylated on a His residue during the reaction cycle. Phosphorylation strongly increases the affinity for substrates and increases the rate of nicotinate D-ribonucleotide production. Dephosphorylation regenerates the low-affinity form of the enzyme, leading to product release.</text>
</comment>
<comment type="similarity">
    <text evidence="4">Belongs to the NAPRTase family.</text>
</comment>
<reference key="1">
    <citation type="journal article" date="2002" name="J. Bacteriol.">
        <title>Whole-genome comparison of Mycobacterium tuberculosis clinical and laboratory strains.</title>
        <authorList>
            <person name="Fleischmann R.D."/>
            <person name="Alland D."/>
            <person name="Eisen J.A."/>
            <person name="Carpenter L."/>
            <person name="White O."/>
            <person name="Peterson J.D."/>
            <person name="DeBoy R.T."/>
            <person name="Dodson R.J."/>
            <person name="Gwinn M.L."/>
            <person name="Haft D.H."/>
            <person name="Hickey E.K."/>
            <person name="Kolonay J.F."/>
            <person name="Nelson W.C."/>
            <person name="Umayam L.A."/>
            <person name="Ermolaeva M.D."/>
            <person name="Salzberg S.L."/>
            <person name="Delcher A."/>
            <person name="Utterback T.R."/>
            <person name="Weidman J.F."/>
            <person name="Khouri H.M."/>
            <person name="Gill J."/>
            <person name="Mikula A."/>
            <person name="Bishai W."/>
            <person name="Jacobs W.R. Jr."/>
            <person name="Venter J.C."/>
            <person name="Fraser C.M."/>
        </authorList>
    </citation>
    <scope>NUCLEOTIDE SEQUENCE [LARGE SCALE GENOMIC DNA]</scope>
    <source>
        <strain>CDC 1551 / Oshkosh</strain>
    </source>
</reference>
<reference key="2">
    <citation type="journal article" date="2003" name="J. Exp. Med.">
        <title>Inhibition of respiration by nitric oxide induces a Mycobacterium tuberculosis dormancy program.</title>
        <authorList>
            <person name="Voskuil M.I."/>
            <person name="Schnappinger D."/>
            <person name="Visconti K.C."/>
            <person name="Harrell M.I."/>
            <person name="Dolganov G.M."/>
            <person name="Sherman D.R."/>
            <person name="Schoolnik G.K."/>
        </authorList>
    </citation>
    <scope>INDUCTION BY NITRIC OXIDE (NO) AND BY HYPOXIA</scope>
    <scope>DORMANCY REGULON</scope>
    <source>
        <strain>CDC 1551 / Oshkosh</strain>
    </source>
</reference>
<protein>
    <recommendedName>
        <fullName>Nicotinate phosphoribosyltransferase pncB2</fullName>
        <shortName>NAPRTase pncB2</shortName>
        <ecNumber>6.3.4.21</ecNumber>
    </recommendedName>
</protein>
<accession>P9WJI6</accession>
<accession>L0T470</accession>
<accession>O53770</accession>
<accession>Q7D9M0</accession>
<name>PNCB2_MYCTO</name>
<feature type="chain" id="PRO_0000427823" description="Nicotinate phosphoribosyltransferase pncB2">
    <location>
        <begin position="1"/>
        <end position="463"/>
    </location>
</feature>
<feature type="modified residue" description="Phosphohistidine" evidence="2">
    <location>
        <position position="202"/>
    </location>
</feature>
<keyword id="KW-0436">Ligase</keyword>
<keyword id="KW-0597">Phosphoprotein</keyword>
<keyword id="KW-0662">Pyridine nucleotide biosynthesis</keyword>
<keyword id="KW-1185">Reference proteome</keyword>
<keyword id="KW-0808">Transferase</keyword>
<dbReference type="EC" id="6.3.4.21"/>
<dbReference type="EMBL" id="AE000516">
    <property type="protein sequence ID" value="AAK44824.1"/>
    <property type="molecule type" value="Genomic_DNA"/>
</dbReference>
<dbReference type="PIR" id="D70933">
    <property type="entry name" value="D70933"/>
</dbReference>
<dbReference type="RefSeq" id="WP_003403007.1">
    <property type="nucleotide sequence ID" value="NZ_KK341227.1"/>
</dbReference>
<dbReference type="SMR" id="P9WJI6"/>
<dbReference type="KEGG" id="mtc:MT0601"/>
<dbReference type="PATRIC" id="fig|83331.31.peg.633"/>
<dbReference type="HOGENOM" id="CLU_025154_3_1_11"/>
<dbReference type="UniPathway" id="UPA00253">
    <property type="reaction ID" value="UER00457"/>
</dbReference>
<dbReference type="Proteomes" id="UP000001020">
    <property type="component" value="Chromosome"/>
</dbReference>
<dbReference type="GO" id="GO:0005829">
    <property type="term" value="C:cytosol"/>
    <property type="evidence" value="ECO:0007669"/>
    <property type="project" value="TreeGrafter"/>
</dbReference>
<dbReference type="GO" id="GO:0004516">
    <property type="term" value="F:nicotinate phosphoribosyltransferase activity"/>
    <property type="evidence" value="ECO:0007669"/>
    <property type="project" value="UniProtKB-EC"/>
</dbReference>
<dbReference type="GO" id="GO:0016740">
    <property type="term" value="F:transferase activity"/>
    <property type="evidence" value="ECO:0007669"/>
    <property type="project" value="UniProtKB-KW"/>
</dbReference>
<dbReference type="GO" id="GO:0034355">
    <property type="term" value="P:NAD biosynthetic process via the salvage pathway"/>
    <property type="evidence" value="ECO:0007669"/>
    <property type="project" value="TreeGrafter"/>
</dbReference>
<dbReference type="CDD" id="cd01570">
    <property type="entry name" value="NAPRTase_A"/>
    <property type="match status" value="1"/>
</dbReference>
<dbReference type="FunFam" id="3.20.20.70:FF:000076">
    <property type="entry name" value="Nicotinate phosphoribosyltransferase"/>
    <property type="match status" value="1"/>
</dbReference>
<dbReference type="Gene3D" id="3.20.20.70">
    <property type="entry name" value="Aldolase class I"/>
    <property type="match status" value="1"/>
</dbReference>
<dbReference type="Gene3D" id="3.20.140.10">
    <property type="entry name" value="nicotinate phosphoribosyltransferase"/>
    <property type="match status" value="1"/>
</dbReference>
<dbReference type="InterPro" id="IPR013785">
    <property type="entry name" value="Aldolase_TIM"/>
</dbReference>
<dbReference type="InterPro" id="IPR041525">
    <property type="entry name" value="N/Namide_PRibTrfase"/>
</dbReference>
<dbReference type="InterPro" id="IPR040727">
    <property type="entry name" value="NAPRTase_N"/>
</dbReference>
<dbReference type="InterPro" id="IPR007229">
    <property type="entry name" value="Nic_PRibTrfase-Fam"/>
</dbReference>
<dbReference type="InterPro" id="IPR006405">
    <property type="entry name" value="Nic_PRibTrfase_pncB"/>
</dbReference>
<dbReference type="InterPro" id="IPR036068">
    <property type="entry name" value="Nicotinate_pribotase-like_C"/>
</dbReference>
<dbReference type="NCBIfam" id="TIGR01513">
    <property type="entry name" value="NAPRTase_put"/>
    <property type="match status" value="1"/>
</dbReference>
<dbReference type="NCBIfam" id="NF006696">
    <property type="entry name" value="PRK09243.1-3"/>
    <property type="match status" value="1"/>
</dbReference>
<dbReference type="NCBIfam" id="NF009131">
    <property type="entry name" value="PRK12484.1"/>
    <property type="match status" value="1"/>
</dbReference>
<dbReference type="PANTHER" id="PTHR11098">
    <property type="entry name" value="NICOTINATE PHOSPHORIBOSYLTRANSFERASE"/>
    <property type="match status" value="1"/>
</dbReference>
<dbReference type="PANTHER" id="PTHR11098:SF1">
    <property type="entry name" value="NICOTINATE PHOSPHORIBOSYLTRANSFERASE"/>
    <property type="match status" value="1"/>
</dbReference>
<dbReference type="Pfam" id="PF04095">
    <property type="entry name" value="NAPRTase"/>
    <property type="match status" value="1"/>
</dbReference>
<dbReference type="Pfam" id="PF17767">
    <property type="entry name" value="NAPRTase_N"/>
    <property type="match status" value="1"/>
</dbReference>
<dbReference type="PIRSF" id="PIRSF000484">
    <property type="entry name" value="NAPRT"/>
    <property type="match status" value="1"/>
</dbReference>
<dbReference type="SUPFAM" id="SSF51690">
    <property type="entry name" value="Nicotinate/Quinolinate PRTase C-terminal domain-like"/>
    <property type="match status" value="1"/>
</dbReference>
<dbReference type="SUPFAM" id="SSF54675">
    <property type="entry name" value="Nicotinate/Quinolinate PRTase N-terminal domain-like"/>
    <property type="match status" value="1"/>
</dbReference>
<evidence type="ECO:0000250" key="1"/>
<evidence type="ECO:0000250" key="2">
    <source>
        <dbReference type="UniProtKB" id="P22253"/>
    </source>
</evidence>
<evidence type="ECO:0000269" key="3">
    <source>
    </source>
</evidence>
<evidence type="ECO:0000305" key="4"/>
<gene>
    <name type="primary">pncB2</name>
    <name type="ordered locus">MT0601</name>
</gene>
<sequence length="463" mass="50509">MAIRQHVGALFTDLYEVTMAQAYWAERMSGTAVFEIFFRKLPPGRSYIMAAGLADVVEFLEAFRFDEQDLRYLRGLGQFSDEFLRWLAGVRFTGDVWAAPEGTVIFPNEPAVQLIAPIIEAQLVETFVLNQIHLQSVLASKAARVVAAARGRPVVDFGARRAHGTDAACKVARTSYLAGAAGTSNLLAARQYGIPTFGTMAHSFVQAFDSEVAAFEAFARLYPATMLLVDTYDTLRGVDHVIELAKRLGNRFDVRAVRLDSGDLDELSKATRARLDTAGLEQVEIFASSGLDENRIAALLAARCPIDGFGVGTQLVVAQDAPALDMAYKLVAYDGSGRTKFSSGKVIYPGRKQVFRKLEHGVFCGDTLGEHGENLPGDPLLVPIMTNGRRIRQHAPTLDGARDWARQQIDALPPELRSLEDTGYSYPVAVSDRIVGELARLRHADTAEAHPGSNVVGAKAKRP</sequence>
<organism>
    <name type="scientific">Mycobacterium tuberculosis (strain CDC 1551 / Oshkosh)</name>
    <dbReference type="NCBI Taxonomy" id="83331"/>
    <lineage>
        <taxon>Bacteria</taxon>
        <taxon>Bacillati</taxon>
        <taxon>Actinomycetota</taxon>
        <taxon>Actinomycetes</taxon>
        <taxon>Mycobacteriales</taxon>
        <taxon>Mycobacteriaceae</taxon>
        <taxon>Mycobacterium</taxon>
        <taxon>Mycobacterium tuberculosis complex</taxon>
    </lineage>
</organism>
<proteinExistence type="evidence at transcript level"/>